<protein>
    <recommendedName>
        <fullName evidence="2">Bifunctional protein PyrR</fullName>
    </recommendedName>
    <domain>
        <recommendedName>
            <fullName evidence="2">Pyrimidine operon regulatory protein</fullName>
        </recommendedName>
    </domain>
    <domain>
        <recommendedName>
            <fullName evidence="2">Uracil phosphoribosyltransferase</fullName>
            <shortName evidence="2">UPRTase</shortName>
            <ecNumber evidence="2">2.4.2.9</ecNumber>
        </recommendedName>
    </domain>
</protein>
<name>PYRR_PSEFL</name>
<accession>Q9F4I7</accession>
<feature type="chain" id="PRO_0000183050" description="Bifunctional protein PyrR">
    <location>
        <begin position="1"/>
        <end position="168"/>
    </location>
</feature>
<feature type="short sequence motif" description="PRPP-binding" evidence="2">
    <location>
        <begin position="90"/>
        <end position="102"/>
    </location>
</feature>
<feature type="binding site" evidence="1">
    <location>
        <begin position="36"/>
        <end position="37"/>
    </location>
    <ligand>
        <name>substrate</name>
    </ligand>
</feature>
<feature type="binding site" evidence="1">
    <location>
        <position position="77"/>
    </location>
    <ligand>
        <name>substrate</name>
    </ligand>
</feature>
<feature type="binding site" evidence="1">
    <location>
        <begin position="94"/>
        <end position="102"/>
    </location>
    <ligand>
        <name>substrate</name>
    </ligand>
</feature>
<feature type="binding site" evidence="1">
    <location>
        <position position="151"/>
    </location>
    <ligand>
        <name>substrate</name>
    </ligand>
</feature>
<organism>
    <name type="scientific">Pseudomonas fluorescens</name>
    <dbReference type="NCBI Taxonomy" id="294"/>
    <lineage>
        <taxon>Bacteria</taxon>
        <taxon>Pseudomonadati</taxon>
        <taxon>Pseudomonadota</taxon>
        <taxon>Gammaproteobacteria</taxon>
        <taxon>Pseudomonadales</taxon>
        <taxon>Pseudomonadaceae</taxon>
        <taxon>Pseudomonas</taxon>
    </lineage>
</organism>
<evidence type="ECO:0000250" key="1"/>
<evidence type="ECO:0000255" key="2">
    <source>
        <dbReference type="HAMAP-Rule" id="MF_01219"/>
    </source>
</evidence>
<dbReference type="EC" id="2.4.2.9" evidence="2"/>
<dbReference type="EMBL" id="AY007523">
    <property type="protein sequence ID" value="AAG15557.1"/>
    <property type="molecule type" value="Genomic_DNA"/>
</dbReference>
<dbReference type="RefSeq" id="WP_003206474.1">
    <property type="nucleotide sequence ID" value="NZ_CP015225.1"/>
</dbReference>
<dbReference type="SMR" id="Q9F4I7"/>
<dbReference type="GeneID" id="57262253"/>
<dbReference type="eggNOG" id="COG2065">
    <property type="taxonomic scope" value="Bacteria"/>
</dbReference>
<dbReference type="GO" id="GO:0004845">
    <property type="term" value="F:uracil phosphoribosyltransferase activity"/>
    <property type="evidence" value="ECO:0007669"/>
    <property type="project" value="UniProtKB-UniRule"/>
</dbReference>
<dbReference type="GO" id="GO:0006355">
    <property type="term" value="P:regulation of DNA-templated transcription"/>
    <property type="evidence" value="ECO:0007669"/>
    <property type="project" value="UniProtKB-UniRule"/>
</dbReference>
<dbReference type="CDD" id="cd06223">
    <property type="entry name" value="PRTases_typeI"/>
    <property type="match status" value="1"/>
</dbReference>
<dbReference type="Gene3D" id="3.40.50.2020">
    <property type="match status" value="1"/>
</dbReference>
<dbReference type="HAMAP" id="MF_01219">
    <property type="entry name" value="PyrR"/>
    <property type="match status" value="1"/>
</dbReference>
<dbReference type="InterPro" id="IPR000836">
    <property type="entry name" value="PRibTrfase_dom"/>
</dbReference>
<dbReference type="InterPro" id="IPR029057">
    <property type="entry name" value="PRTase-like"/>
</dbReference>
<dbReference type="InterPro" id="IPR023050">
    <property type="entry name" value="PyrR"/>
</dbReference>
<dbReference type="InterPro" id="IPR050137">
    <property type="entry name" value="PyrR_bifunctional"/>
</dbReference>
<dbReference type="NCBIfam" id="NF003545">
    <property type="entry name" value="PRK05205.1-1"/>
    <property type="match status" value="1"/>
</dbReference>
<dbReference type="PANTHER" id="PTHR11608">
    <property type="entry name" value="BIFUNCTIONAL PROTEIN PYRR"/>
    <property type="match status" value="1"/>
</dbReference>
<dbReference type="PANTHER" id="PTHR11608:SF0">
    <property type="entry name" value="BIFUNCTIONAL PROTEIN PYRR"/>
    <property type="match status" value="1"/>
</dbReference>
<dbReference type="Pfam" id="PF00156">
    <property type="entry name" value="Pribosyltran"/>
    <property type="match status" value="1"/>
</dbReference>
<dbReference type="SUPFAM" id="SSF53271">
    <property type="entry name" value="PRTase-like"/>
    <property type="match status" value="1"/>
</dbReference>
<reference key="1">
    <citation type="submission" date="2000-08" db="EMBL/GenBank/DDBJ databases">
        <title>The regulatory protein PyrR of Pseudomona fluorescens is required for competitive root colonization.</title>
        <authorList>
            <person name="Camacho-Carvajal M.M."/>
            <person name="Scheublin T."/>
            <person name="Lugtenberg B.J.J."/>
            <person name="Bloemberg G.V."/>
        </authorList>
    </citation>
    <scope>NUCLEOTIDE SEQUENCE [GENOMIC DNA]</scope>
    <source>
        <strain>WCS365</strain>
    </source>
</reference>
<comment type="function">
    <text evidence="2">Regulates the transcription of the pyrimidine nucleotide (pyr) operon in response to exogenous pyrimidines.</text>
</comment>
<comment type="function">
    <text evidence="2">Also displays a weak uracil phosphoribosyltransferase activity which is not physiologically significant.</text>
</comment>
<comment type="catalytic activity">
    <reaction evidence="2">
        <text>UMP + diphosphate = 5-phospho-alpha-D-ribose 1-diphosphate + uracil</text>
        <dbReference type="Rhea" id="RHEA:13017"/>
        <dbReference type="ChEBI" id="CHEBI:17568"/>
        <dbReference type="ChEBI" id="CHEBI:33019"/>
        <dbReference type="ChEBI" id="CHEBI:57865"/>
        <dbReference type="ChEBI" id="CHEBI:58017"/>
        <dbReference type="EC" id="2.4.2.9"/>
    </reaction>
</comment>
<comment type="similarity">
    <text evidence="2">Belongs to the purine/pyrimidine phosphoribosyltransferase family. PyrR subfamily.</text>
</comment>
<gene>
    <name evidence="2" type="primary">pyrR</name>
</gene>
<proteinExistence type="inferred from homology"/>
<sequence length="168" mass="18281">MSLPNPAELISQMAIRLKAHLEHRGISDPRYIGIRTGGVWVAQALLEALGSQSPLGTLDVSFYRDDFSQNGLHPQVRPSALPFEIEGQHLVLIDDVLMSGRTIRAAMNELFDYGRPASVTLVCLLDLDAAELPIRPNVVGATLTLAAHERVKLSGPSPLQLELQDLAL</sequence>
<keyword id="KW-0328">Glycosyltransferase</keyword>
<keyword id="KW-0804">Transcription</keyword>
<keyword id="KW-0805">Transcription regulation</keyword>
<keyword id="KW-0808">Transferase</keyword>